<sequence>MKSLILWSIKGYRRWISPLFPPSCRFQPTCSQYALEAVERFGVLRGSWLALKRLGRCHPFHPGGYDPVPHLCHHDLDNTP</sequence>
<dbReference type="EMBL" id="CP000951">
    <property type="protein sequence ID" value="ACA99174.1"/>
    <property type="molecule type" value="Genomic_DNA"/>
</dbReference>
<dbReference type="RefSeq" id="WP_012306797.1">
    <property type="nucleotide sequence ID" value="NC_010475.1"/>
</dbReference>
<dbReference type="STRING" id="32049.SYNPCC7002_A1175"/>
<dbReference type="KEGG" id="syp:SYNPCC7002_A1175"/>
<dbReference type="eggNOG" id="COG0759">
    <property type="taxonomic scope" value="Bacteria"/>
</dbReference>
<dbReference type="HOGENOM" id="CLU_144811_5_2_3"/>
<dbReference type="Proteomes" id="UP000001688">
    <property type="component" value="Chromosome"/>
</dbReference>
<dbReference type="GO" id="GO:0005886">
    <property type="term" value="C:plasma membrane"/>
    <property type="evidence" value="ECO:0007669"/>
    <property type="project" value="UniProtKB-SubCell"/>
</dbReference>
<dbReference type="HAMAP" id="MF_00386">
    <property type="entry name" value="UPF0161_YidD"/>
    <property type="match status" value="1"/>
</dbReference>
<dbReference type="InterPro" id="IPR002696">
    <property type="entry name" value="Membr_insert_effic_factor_YidD"/>
</dbReference>
<dbReference type="NCBIfam" id="TIGR00278">
    <property type="entry name" value="membrane protein insertion efficiency factor YidD"/>
    <property type="match status" value="1"/>
</dbReference>
<dbReference type="PANTHER" id="PTHR33383">
    <property type="entry name" value="MEMBRANE PROTEIN INSERTION EFFICIENCY FACTOR-RELATED"/>
    <property type="match status" value="1"/>
</dbReference>
<dbReference type="PANTHER" id="PTHR33383:SF1">
    <property type="entry name" value="MEMBRANE PROTEIN INSERTION EFFICIENCY FACTOR-RELATED"/>
    <property type="match status" value="1"/>
</dbReference>
<dbReference type="Pfam" id="PF01809">
    <property type="entry name" value="YidD"/>
    <property type="match status" value="1"/>
</dbReference>
<dbReference type="SMART" id="SM01234">
    <property type="entry name" value="Haemolytic"/>
    <property type="match status" value="1"/>
</dbReference>
<evidence type="ECO:0000255" key="1">
    <source>
        <dbReference type="HAMAP-Rule" id="MF_00386"/>
    </source>
</evidence>
<comment type="function">
    <text evidence="1">Could be involved in insertion of integral membrane proteins into the membrane.</text>
</comment>
<comment type="subcellular location">
    <subcellularLocation>
        <location evidence="1">Cell inner membrane</location>
        <topology evidence="1">Peripheral membrane protein</topology>
        <orientation evidence="1">Cytoplasmic side</orientation>
    </subcellularLocation>
</comment>
<comment type="similarity">
    <text evidence="1">Belongs to the UPF0161 family.</text>
</comment>
<gene>
    <name type="ordered locus">SYNPCC7002_A1175</name>
</gene>
<accession>B1XKC8</accession>
<name>YIDD_PICP2</name>
<protein>
    <recommendedName>
        <fullName evidence="1">Putative membrane protein insertion efficiency factor</fullName>
    </recommendedName>
</protein>
<keyword id="KW-0997">Cell inner membrane</keyword>
<keyword id="KW-1003">Cell membrane</keyword>
<keyword id="KW-0472">Membrane</keyword>
<keyword id="KW-1185">Reference proteome</keyword>
<feature type="chain" id="PRO_1000197795" description="Putative membrane protein insertion efficiency factor">
    <location>
        <begin position="1"/>
        <end position="80"/>
    </location>
</feature>
<proteinExistence type="inferred from homology"/>
<organism>
    <name type="scientific">Picosynechococcus sp. (strain ATCC 27264 / PCC 7002 / PR-6)</name>
    <name type="common">Agmenellum quadruplicatum</name>
    <dbReference type="NCBI Taxonomy" id="32049"/>
    <lineage>
        <taxon>Bacteria</taxon>
        <taxon>Bacillati</taxon>
        <taxon>Cyanobacteriota</taxon>
        <taxon>Cyanophyceae</taxon>
        <taxon>Oscillatoriophycideae</taxon>
        <taxon>Chroococcales</taxon>
        <taxon>Geminocystaceae</taxon>
        <taxon>Picosynechococcus</taxon>
    </lineage>
</organism>
<reference key="1">
    <citation type="submission" date="2008-02" db="EMBL/GenBank/DDBJ databases">
        <title>Complete sequence of Synechococcus sp. PCC 7002.</title>
        <authorList>
            <person name="Li T."/>
            <person name="Zhao J."/>
            <person name="Zhao C."/>
            <person name="Liu Z."/>
            <person name="Zhao F."/>
            <person name="Marquardt J."/>
            <person name="Nomura C.T."/>
            <person name="Persson S."/>
            <person name="Detter J.C."/>
            <person name="Richardson P.M."/>
            <person name="Lanz C."/>
            <person name="Schuster S.C."/>
            <person name="Wang J."/>
            <person name="Li S."/>
            <person name="Huang X."/>
            <person name="Cai T."/>
            <person name="Yu Z."/>
            <person name="Luo J."/>
            <person name="Zhao J."/>
            <person name="Bryant D.A."/>
        </authorList>
    </citation>
    <scope>NUCLEOTIDE SEQUENCE [LARGE SCALE GENOMIC DNA]</scope>
    <source>
        <strain>ATCC 27264 / PCC 7002 / PR-6</strain>
    </source>
</reference>